<organism>
    <name type="scientific">Saccharomyces cerevisiae</name>
    <name type="common">Baker's yeast</name>
    <dbReference type="NCBI Taxonomy" id="4932"/>
    <lineage>
        <taxon>Eukaryota</taxon>
        <taxon>Fungi</taxon>
        <taxon>Dikarya</taxon>
        <taxon>Ascomycota</taxon>
        <taxon>Saccharomycotina</taxon>
        <taxon>Saccharomycetes</taxon>
        <taxon>Saccharomycetales</taxon>
        <taxon>Saccharomycetaceae</taxon>
        <taxon>Saccharomyces</taxon>
    </lineage>
</organism>
<dbReference type="EC" id="3.4.23.-"/>
<dbReference type="EC" id="2.7.7.49"/>
<dbReference type="EC" id="2.7.7.7"/>
<dbReference type="EC" id="3.1.26.4"/>
<dbReference type="EMBL" id="M18706">
    <property type="protein sequence ID" value="AAA66938.1"/>
    <property type="status" value="ALT_SEQ"/>
    <property type="molecule type" value="Genomic_DNA"/>
</dbReference>
<dbReference type="EMBL" id="X01736">
    <property type="protein sequence ID" value="CAA25874.1"/>
    <property type="status" value="ALT_SEQ"/>
    <property type="molecule type" value="Genomic_DNA"/>
</dbReference>
<dbReference type="PIR" id="B22671">
    <property type="entry name" value="B22671"/>
</dbReference>
<dbReference type="PIR" id="B28097">
    <property type="entry name" value="B28097"/>
</dbReference>
<dbReference type="PDB" id="7Z0H">
    <property type="method" value="EM"/>
    <property type="resolution" value="2.60 A"/>
    <property type="chains" value="W=583-1217"/>
</dbReference>
<dbReference type="PDB" id="7Z2Z">
    <property type="method" value="EM"/>
    <property type="resolution" value="3.07 A"/>
    <property type="chains" value="W=583-1217"/>
</dbReference>
<dbReference type="PDB" id="7Z30">
    <property type="method" value="EM"/>
    <property type="resolution" value="2.90 A"/>
    <property type="chains" value="W=583-1217"/>
</dbReference>
<dbReference type="PDB" id="7Z31">
    <property type="method" value="EM"/>
    <property type="resolution" value="2.76 A"/>
    <property type="chains" value="W=583-1217"/>
</dbReference>
<dbReference type="PDBsum" id="7Z0H"/>
<dbReference type="PDBsum" id="7Z2Z"/>
<dbReference type="PDBsum" id="7Z30"/>
<dbReference type="PDBsum" id="7Z31"/>
<dbReference type="EMDB" id="EMD-14421"/>
<dbReference type="EMDB" id="EMD-14468"/>
<dbReference type="EMDB" id="EMD-14469"/>
<dbReference type="EMDB" id="EMD-14470"/>
<dbReference type="SMR" id="Q07163"/>
<dbReference type="VEuPathDB" id="FungiDB:YPR137C-B"/>
<dbReference type="GO" id="GO:0005737">
    <property type="term" value="C:cytoplasm"/>
    <property type="evidence" value="ECO:0007669"/>
    <property type="project" value="UniProtKB-SubCell"/>
</dbReference>
<dbReference type="GO" id="GO:0005634">
    <property type="term" value="C:nucleus"/>
    <property type="evidence" value="ECO:0007669"/>
    <property type="project" value="UniProtKB-SubCell"/>
</dbReference>
<dbReference type="GO" id="GO:0004190">
    <property type="term" value="F:aspartic-type endopeptidase activity"/>
    <property type="evidence" value="ECO:0007669"/>
    <property type="project" value="UniProtKB-KW"/>
</dbReference>
<dbReference type="GO" id="GO:0005524">
    <property type="term" value="F:ATP binding"/>
    <property type="evidence" value="ECO:0007669"/>
    <property type="project" value="UniProtKB-KW"/>
</dbReference>
<dbReference type="GO" id="GO:0003677">
    <property type="term" value="F:DNA binding"/>
    <property type="evidence" value="ECO:0007669"/>
    <property type="project" value="UniProtKB-KW"/>
</dbReference>
<dbReference type="GO" id="GO:0003887">
    <property type="term" value="F:DNA-directed DNA polymerase activity"/>
    <property type="evidence" value="ECO:0007669"/>
    <property type="project" value="UniProtKB-KW"/>
</dbReference>
<dbReference type="GO" id="GO:0003723">
    <property type="term" value="F:RNA binding"/>
    <property type="evidence" value="ECO:0007669"/>
    <property type="project" value="UniProtKB-KW"/>
</dbReference>
<dbReference type="GO" id="GO:0003964">
    <property type="term" value="F:RNA-directed DNA polymerase activity"/>
    <property type="evidence" value="ECO:0007669"/>
    <property type="project" value="UniProtKB-KW"/>
</dbReference>
<dbReference type="GO" id="GO:0004523">
    <property type="term" value="F:RNA-DNA hybrid ribonuclease activity"/>
    <property type="evidence" value="ECO:0007669"/>
    <property type="project" value="UniProtKB-EC"/>
</dbReference>
<dbReference type="GO" id="GO:0008270">
    <property type="term" value="F:zinc ion binding"/>
    <property type="evidence" value="ECO:0007669"/>
    <property type="project" value="UniProtKB-KW"/>
</dbReference>
<dbReference type="GO" id="GO:0015074">
    <property type="term" value="P:DNA integration"/>
    <property type="evidence" value="ECO:0007669"/>
    <property type="project" value="UniProtKB-KW"/>
</dbReference>
<dbReference type="GO" id="GO:0006310">
    <property type="term" value="P:DNA recombination"/>
    <property type="evidence" value="ECO:0007669"/>
    <property type="project" value="UniProtKB-KW"/>
</dbReference>
<dbReference type="GO" id="GO:0006508">
    <property type="term" value="P:proteolysis"/>
    <property type="evidence" value="ECO:0007669"/>
    <property type="project" value="UniProtKB-KW"/>
</dbReference>
<dbReference type="GO" id="GO:0032196">
    <property type="term" value="P:transposition"/>
    <property type="evidence" value="ECO:0007669"/>
    <property type="project" value="UniProtKB-KW"/>
</dbReference>
<dbReference type="GO" id="GO:0075523">
    <property type="term" value="P:viral translational frameshifting"/>
    <property type="evidence" value="ECO:0007669"/>
    <property type="project" value="UniProtKB-KW"/>
</dbReference>
<dbReference type="CDD" id="cd09272">
    <property type="entry name" value="RNase_HI_RT_Ty1"/>
    <property type="match status" value="1"/>
</dbReference>
<dbReference type="FunFam" id="3.30.420.10:FF:000050">
    <property type="entry name" value="Transposon Ty2-DR3 Gag-Pol polyprotein"/>
    <property type="match status" value="1"/>
</dbReference>
<dbReference type="Gene3D" id="3.30.420.10">
    <property type="entry name" value="Ribonuclease H-like superfamily/Ribonuclease H"/>
    <property type="match status" value="1"/>
</dbReference>
<dbReference type="InterPro" id="IPR001969">
    <property type="entry name" value="Aspartic_peptidase_AS"/>
</dbReference>
<dbReference type="InterPro" id="IPR043502">
    <property type="entry name" value="DNA/RNA_pol_sf"/>
</dbReference>
<dbReference type="InterPro" id="IPR001584">
    <property type="entry name" value="Integrase_cat-core"/>
</dbReference>
<dbReference type="InterPro" id="IPR039537">
    <property type="entry name" value="Retrotran_Ty1/copia-like"/>
</dbReference>
<dbReference type="InterPro" id="IPR012337">
    <property type="entry name" value="RNaseH-like_sf"/>
</dbReference>
<dbReference type="InterPro" id="IPR036397">
    <property type="entry name" value="RNaseH_sf"/>
</dbReference>
<dbReference type="InterPro" id="IPR013103">
    <property type="entry name" value="RVT_2"/>
</dbReference>
<dbReference type="InterPro" id="IPR015820">
    <property type="entry name" value="TYA"/>
</dbReference>
<dbReference type="PANTHER" id="PTHR42648">
    <property type="entry name" value="TRANSPOSASE, PUTATIVE-RELATED"/>
    <property type="match status" value="1"/>
</dbReference>
<dbReference type="PANTHER" id="PTHR42648:SF11">
    <property type="entry name" value="TRANSPOSON TY4-P GAG-POL POLYPROTEIN"/>
    <property type="match status" value="1"/>
</dbReference>
<dbReference type="Pfam" id="PF00665">
    <property type="entry name" value="rve"/>
    <property type="match status" value="1"/>
</dbReference>
<dbReference type="Pfam" id="PF07727">
    <property type="entry name" value="RVT_2"/>
    <property type="match status" value="1"/>
</dbReference>
<dbReference type="Pfam" id="PF01021">
    <property type="entry name" value="TYA"/>
    <property type="match status" value="1"/>
</dbReference>
<dbReference type="SUPFAM" id="SSF56672">
    <property type="entry name" value="DNA/RNA polymerases"/>
    <property type="match status" value="1"/>
</dbReference>
<dbReference type="SUPFAM" id="SSF53098">
    <property type="entry name" value="Ribonuclease H-like"/>
    <property type="match status" value="1"/>
</dbReference>
<dbReference type="PROSITE" id="PS00141">
    <property type="entry name" value="ASP_PROTEASE"/>
    <property type="match status" value="1"/>
</dbReference>
<dbReference type="PROSITE" id="PS50994">
    <property type="entry name" value="INTEGRASE"/>
    <property type="match status" value="1"/>
</dbReference>
<proteinExistence type="evidence at protein level"/>
<reference key="1">
    <citation type="journal article" date="1988" name="Mol. Cell. Biol.">
        <title>The Saccharomyces cerevisiae genome contains functional and nonfunctional copies of transposon Ty1.</title>
        <authorList>
            <person name="Boeke J.D."/>
            <person name="Eichinger D."/>
            <person name="Castrillon D."/>
            <person name="Fink G.R."/>
        </authorList>
    </citation>
    <scope>NUCLEOTIDE SEQUENCE [GENOMIC DNA]</scope>
    <scope>MUTAGENESIS OF LEU-602</scope>
    <source>
        <strain>JB84A</strain>
    </source>
</reference>
<reference key="2">
    <citation type="journal article" date="1985" name="Nature">
        <title>A retrovirus-like strategy for expression of a fusion protein encoded by yeast transposon Ty1.</title>
        <authorList>
            <person name="Mellor J."/>
            <person name="Fulton S.M."/>
            <person name="Dobson M.J."/>
            <person name="Wilson W."/>
            <person name="Kingsman S.M."/>
            <person name="Kingsman A.J."/>
        </authorList>
    </citation>
    <scope>NUCLEOTIDE SEQUENCE [GENOMIC DNA] OF 1-480</scope>
    <scope>VARIANTS TY1-15 ILE-12; 74-PRO--PRO-79 DELINS THR-ALA-GLN-SER-HIS-SER AND ARG-142</scope>
</reference>
<reference key="3">
    <citation type="journal article" date="2001" name="J. Virol.">
        <title>Frameshift signal transplantation and the unambiguous analysis of mutations in the yeast retrotransposon Ty1 Gag-Pol overlap region.</title>
        <authorList>
            <person name="Lawler J.F. Jr."/>
            <person name="Merkulov G.V."/>
            <person name="Boeke J.D."/>
        </authorList>
    </citation>
    <scope>PROTEIN SEQUENCE OF 402-408</scope>
    <scope>CLEAVAGE SITE HIS-401-402-ASN</scope>
    <scope>IDENTIFICATION BY MASS SPECTROMETRY</scope>
</reference>
<reference key="4">
    <citation type="journal article" date="1990" name="Cell">
        <title>Ribosomal frameshifting in the yeast retrotransposon Ty: tRNAs induce slippage on a 7 nucleotide minimal site.</title>
        <authorList>
            <person name="Belcourt M.F."/>
            <person name="Farabaugh P.J."/>
        </authorList>
    </citation>
    <scope>RIBOSOMAL FRAMESHIFT SITE</scope>
</reference>
<reference key="5">
    <citation type="journal article" date="1991" name="J. Virol.">
        <title>Proteolytic processing of pol-TYB proteins from the yeast retrotransposon Ty1.</title>
        <authorList>
            <person name="Garfinkel D.J."/>
            <person name="Hedge A.M."/>
            <person name="Youngren S.D."/>
            <person name="Copeland T.D."/>
        </authorList>
    </citation>
    <scope>PROTEOLYTIC PROCESSING</scope>
</reference>
<reference key="6">
    <citation type="journal article" date="1994" name="Proc. Natl. Acad. Sci. U.S.A.">
        <title>Expression and partial purification of enzymatically active recombinant Ty1 integrase in Saccharomyces cerevisiae.</title>
        <authorList>
            <person name="Moore S.P."/>
            <person name="Garfinkel D.J."/>
        </authorList>
    </citation>
    <scope>CLEAVAGE SITES ASN-582-583-ASN AND ALA-1217-1218-ALA</scope>
</reference>
<reference key="7">
    <citation type="journal article" date="1998" name="Mol. Cell. Biol.">
        <title>A Ty1 integrase nuclear localization signal required for retrotransposition.</title>
        <authorList>
            <person name="Moore S.P."/>
            <person name="Rinckel L.A."/>
            <person name="Garfinkel D.J."/>
        </authorList>
    </citation>
    <scope>FUNCTION</scope>
    <scope>SUBCELLULAR LOCATION</scope>
    <scope>MUTAGENESIS OF LYS-1178; LYS-1179; ARG-1180; 1183-GLU--GLU-1188; LYS-1210; LYS-1211 AND ARG-1212</scope>
</reference>
<reference key="8">
    <citation type="journal article" date="2000" name="J. Biol. Chem.">
        <title>The Gag-like protein of the yeast Ty1 retrotransposon contains a nucleic acid chaperone domain analogous to retroviral nucleocapsid proteins.</title>
        <authorList>
            <person name="Cristofari G."/>
            <person name="Ficheux D."/>
            <person name="Darlix J.-L."/>
        </authorList>
    </citation>
    <scope>FUNCTION</scope>
    <scope>RNA-BINDING</scope>
</reference>
<reference key="9">
    <citation type="journal article" date="2001" name="J. Biol. Chem.">
        <title>Polypurine tract formation by Ty1 RNase H.</title>
        <authorList>
            <person name="Wilhelm M."/>
            <person name="Uzun O."/>
            <person name="Mules E.H."/>
            <person name="Gabriel A."/>
            <person name="Wilhelm F.-X."/>
        </authorList>
    </citation>
    <scope>FUNCTION</scope>
</reference>
<reference key="10">
    <citation type="journal article" date="2001" name="J. Virol.">
        <title>Ty1 proteolytic cleavage sites are required for transposition: all sites are not created equal.</title>
        <authorList>
            <person name="Merkulov G.V."/>
            <person name="Lawler J.F. Jr."/>
            <person name="Eby Y."/>
            <person name="Boeke J.D."/>
        </authorList>
    </citation>
    <scope>PROTEOLYTIC PROCESSING</scope>
</reference>
<comment type="function">
    <text>Capsid protein (CA) is the structural component of the virus-like particle (VLP), forming the shell that encapsulates the retrotransposons dimeric RNA genome. The particles are assembled from trimer-clustered units and there are holes in the capsid shells that allow for the diffusion of macromolecules. CA also has nucleocapsid-like chaperone activity, promoting primer tRNA(i)-Met annealing to the multipartite primer-binding site (PBS), dimerization of Ty1 RNA and initiation of reverse transcription.</text>
</comment>
<comment type="function">
    <text>The aspartyl protease (PR) mediates the proteolytic cleavages of the Gag and Gag-Pol polyproteins after assembly of the VLP.</text>
</comment>
<comment type="function">
    <text>Reverse transcriptase/ribonuclease H (RT) is a multifunctional enzyme that catalyzes the conversion of the retro-elements RNA genome into dsDNA within the VLP. The enzyme displays a DNA polymerase activity that can copy either DNA or RNA templates, and a ribonuclease H (RNase H) activity that cleaves the RNA strand of RNA-DNA heteroduplexes during plus-strand synthesis and hydrolyzes RNA primers. The conversion leads to a linear dsDNA copy of the retrotransposon that includes long terminal repeats (LTRs) at both ends.</text>
</comment>
<comment type="function">
    <text>Integrase (IN) targets the VLP to the nucleus, where a subparticle preintegration complex (PIC) containing at least integrase and the newly synthesized dsDNA copy of the retrotransposon must transit the nuclear membrane. Once in the nucleus, integrase performs the integration of the dsDNA into the host genome.</text>
</comment>
<comment type="catalytic activity">
    <reaction>
        <text>DNA(n) + a 2'-deoxyribonucleoside 5'-triphosphate = DNA(n+1) + diphosphate</text>
        <dbReference type="Rhea" id="RHEA:22508"/>
        <dbReference type="Rhea" id="RHEA-COMP:17339"/>
        <dbReference type="Rhea" id="RHEA-COMP:17340"/>
        <dbReference type="ChEBI" id="CHEBI:33019"/>
        <dbReference type="ChEBI" id="CHEBI:61560"/>
        <dbReference type="ChEBI" id="CHEBI:173112"/>
        <dbReference type="EC" id="2.7.7.49"/>
    </reaction>
</comment>
<comment type="catalytic activity">
    <reaction>
        <text>DNA(n) + a 2'-deoxyribonucleoside 5'-triphosphate = DNA(n+1) + diphosphate</text>
        <dbReference type="Rhea" id="RHEA:22508"/>
        <dbReference type="Rhea" id="RHEA-COMP:17339"/>
        <dbReference type="Rhea" id="RHEA-COMP:17340"/>
        <dbReference type="ChEBI" id="CHEBI:33019"/>
        <dbReference type="ChEBI" id="CHEBI:61560"/>
        <dbReference type="ChEBI" id="CHEBI:173112"/>
        <dbReference type="EC" id="2.7.7.7"/>
    </reaction>
</comment>
<comment type="catalytic activity">
    <reaction>
        <text>Endonucleolytic cleavage to 5'-phosphomonoester.</text>
        <dbReference type="EC" id="3.1.26.4"/>
    </reaction>
</comment>
<comment type="subunit">
    <text evidence="1">The capsid protein forms a homotrimer, from which the VLPs are assembled. The protease is a homodimer, whose active site consists of two apposed aspartic acid residues (By similarity).</text>
</comment>
<comment type="subcellular location">
    <subcellularLocation>
        <location evidence="13">Cytoplasm</location>
    </subcellularLocation>
    <subcellularLocation>
        <location evidence="13">Nucleus</location>
    </subcellularLocation>
</comment>
<comment type="alternative products">
    <event type="ribosomal frameshifting"/>
    <isoform>
        <id>Q07163-1</id>
        <name>Transposon TyH3 Gag-Pol polyprotein</name>
        <sequence type="displayed"/>
    </isoform>
    <isoform>
        <id>P08405-1</id>
        <name>Transposon TyH3 Gag polyprotein</name>
        <sequence type="external"/>
    </isoform>
    <text evidence="9">The Gag-Pol polyprotein is generated by a +1 ribosomal frameshift. The ratio of Gag:Gag-Pol varies between 20:1 and 5:1.</text>
</comment>
<comment type="domain">
    <text>The C-terminal RNA-binding region of CA is sufficient for all its nucleocapsid-like chaperone activities.</text>
</comment>
<comment type="domain">
    <text>Integrase core domain contains the D-x(n)-D-x(35)-E motif, named for the phylogenetically conserved glutamic acid and aspartic acid residues and the invariant 35 amino acid spacing between the second and third acidic residues. Each acidic residue of the D,D(35)E motif is independently essential for the 3'-processing and strand transfer activities of purified integrase protein.</text>
</comment>
<comment type="PTM">
    <text evidence="6 7 8 12">Initially, virus-like particles (VLPs) are composed of the structural unprocessed proteins Gag and Gag-Pol, and also contain the host initiator methionine tRNA (tRNA(i)-Met) which serves as a primer for minus-strand DNA synthesis, and a dimer of genomic Ty RNA. Processing of the polyproteins occurs within the particle and proceeds by an ordered pathway, called maturation. First, the protease (PR) is released by autocatalytic cleavage of the Gag-Pol polyprotein yielding capsid protein p45 and a Pol-p154 precursor protein. This cleavage is a prerequisite for subsequent processing of Pol-p154 at the remaining sites to release the mature structural and catalytic proteins. Maturation takes place prior to the RT reaction and is required to produce transposition-competent VLPs.</text>
</comment>
<comment type="miscellaneous">
    <text>Retrotransposons are mobile genetic entities that are able to replicate via an RNA intermediate and a reverse transcription step. In contrast to retroviruses, retrotransposons are non-infectious, lack an envelope and remain intracellular. Ty1 retrotransposons belong to the copia elements (pseudoviridae).</text>
</comment>
<comment type="miscellaneous">
    <molecule>Isoform Transposon TyH3 Gag-Pol polyprotein</molecule>
    <text>Produced by +1 ribosomal frameshifting between codon Leu-435 and Gly-436.</text>
</comment>
<comment type="sequence caution" evidence="14">
    <conflict type="erroneous gene model prediction">
        <sequence resource="EMBL-CDS" id="AAA66938"/>
    </conflict>
</comment>
<comment type="sequence caution" evidence="14">
    <conflict type="erroneous gene model prediction">
        <sequence resource="EMBL-CDS" id="CAA25874"/>
    </conflict>
</comment>
<sequence>MESQQLSQHSPNSHGSACASVTSKEVHTNQDPLDVSASKTEECEKASTKANSQQTTTPASSAVPENPHHASPQPASVPPPQNGPYPQQCMMTQNQANPSGWSFYGHPSMIPYTPYQMSPMYFPPGPQSQFPQYPSSVGTPLSTPSPESGNTFTDSSSADSDMTSTKKYVRPPPMLTSPNDFPNWVKTYIKFLQNSNLGGIIPTVNGKPVRQITDDELTFLYNTFQIFAPSQFLPTWVKDILSVDYTDIMKILSKSIEKMQSDTQEANDIVTLANLQYNGSTPADAFETKVTNIIDRLNNNGIHINNKVACQLIMRGLSGEYKFLRYTRHRHLNMTVAELFLDIHAIYEEQQGSRNSKPNYRRNPSDEKNDSRSYTNTTKPKVIARNPQKTNNSKSKTARAHNVSTSNNSPSTDNDSISKSTTEPIQLNNKHDLHLGQKLTESTVNHTNHSDDELPGHLLLDSGASRTLIRSAHHIHSASSNPDINVVDAQKRNIPINAIGDLQFHFQDNTKTSIKVLHTPNIAYDLLSLNELAAVDITACFTKNVLERSDGTVLAPIVKYGDFYWVSKKYLLPSNISVPTINNVHTSESTRKYPYPFIHRMLAHANAQTIRYSLKNNTITYFNESDVDWSSAIDYQCPDCLIGKSTKHRHIKGSRLKYQNSYEPFQYLHTDIFGPVHNLPNSAPSYFISFTDETTKFRWVYPLHDRREDSILDVFTTILAFIKNQFQASVLVIQMDRGSEYTNRTLHKFLEKNGITPCYTTTADSRAHGVAERLNRTLLDDCRTQLQCSGLPNHLWFSAIEFSTIVRNSLASPKSKKSARQHAGLAGLDISTLLPFGQPVIVNDHNPNSKIHPRGIPGYALHPSRNSYGYIIYLPSLKKTVDTTNYVILQGKESRLDQFNYDALTFDEDLNRLTASYHSFIASNEIQESNDLNIESDHDFQSDIELHPEQPRNVLSKAVSPTDSTPPSTHTEDSKRVSKTNIRAPREVDPNISESNILPSKKRSSTPQISNIESTGSGGMHKLNVPLLAPMSQSNTHESSHASKSKDFRHSDSYSENETNHTNVPISSTGGTNNKTVPQISDQETEKRIIHRSPSIDASPPENNSSHNIVPIKTPTTVSEQNTEESIIADLPLPDLPPESPTEFPDPFKELPPINSRQTNSSLGGIGDSNAYTTINSKKRSLEDNETEIKVSRDTWNTKNMRSLEPPRSKKRIHLIAAVKAVKSIKPIRTTLRYDEAITYNKDIKEKEKYIEAYHKEVNQLLKMKTWDTDEYYDRKEIDPKRVINSMFIFNKKRDGTHKARFVARGDIQHPDTYDSGMQSNTVHHYALMTSLSLALDNNYYITQLDISSAYLYADIKEELYIRPPPHLGMNDKLIRLKKSLYGLKQSGANWYETIKSYLIQQCGMEEVRGWSCVFKNSQVTICLFVDDMVLFSKNLNSNKRIIEKLKMQYDTKIINLGESDEEIQYDILGLEIKYQRGKYMKLGMENSLTEKIPKLNVPLNPKGRKLSAPGQPGLYIDQDELEIDEDEYKEKVHEMQKLIGLASYVGYKFRFDLLYYINTLAQHILFPSRQVLDMTYELIQFMWDTRDKQLIWHKNKPTEPDNKLVAISDASYGNQPYYKSQIGNIYLLNGKVIGGKSTKASLTCTSTTEAEIHAISESVPLLNNLSYLIQELNKKPIIKGLLTDSRSTISIIKSTNEEKFRNRFFGTKAMRLRDEVSGNNLYVYYIETKKNIADVMTKPLPIKTFKLLTNKWIH</sequence>
<evidence type="ECO:0000250" key="1"/>
<evidence type="ECO:0000250" key="2">
    <source>
        <dbReference type="UniProtKB" id="Q99231"/>
    </source>
</evidence>
<evidence type="ECO:0000255" key="3">
    <source>
        <dbReference type="PROSITE-ProRule" id="PRU00457"/>
    </source>
</evidence>
<evidence type="ECO:0000255" key="4">
    <source>
        <dbReference type="PROSITE-ProRule" id="PRU10094"/>
    </source>
</evidence>
<evidence type="ECO:0000256" key="5">
    <source>
        <dbReference type="SAM" id="MobiDB-lite"/>
    </source>
</evidence>
<evidence type="ECO:0000269" key="6">
    <source>
    </source>
</evidence>
<evidence type="ECO:0000269" key="7">
    <source>
    </source>
</evidence>
<evidence type="ECO:0000269" key="8">
    <source>
    </source>
</evidence>
<evidence type="ECO:0000269" key="9">
    <source>
    </source>
</evidence>
<evidence type="ECO:0000269" key="10">
    <source>
    </source>
</evidence>
<evidence type="ECO:0000269" key="11">
    <source>
    </source>
</evidence>
<evidence type="ECO:0000269" key="12">
    <source>
    </source>
</evidence>
<evidence type="ECO:0000269" key="13">
    <source>
    </source>
</evidence>
<evidence type="ECO:0000305" key="14"/>
<gene>
    <name type="primary">TY1B</name>
    <name type="synonym">POL</name>
    <name type="synonym">TYB1</name>
</gene>
<accession>Q07163</accession>
<accession>Q07169</accession>
<keyword id="KW-0002">3D-structure</keyword>
<keyword id="KW-0064">Aspartyl protease</keyword>
<keyword id="KW-0067">ATP-binding</keyword>
<keyword id="KW-0963">Cytoplasm</keyword>
<keyword id="KW-0903">Direct protein sequencing</keyword>
<keyword id="KW-0229">DNA integration</keyword>
<keyword id="KW-0233">DNA recombination</keyword>
<keyword id="KW-0238">DNA-binding</keyword>
<keyword id="KW-0239">DNA-directed DNA polymerase</keyword>
<keyword id="KW-0255">Endonuclease</keyword>
<keyword id="KW-0378">Hydrolase</keyword>
<keyword id="KW-0460">Magnesium</keyword>
<keyword id="KW-0479">Metal-binding</keyword>
<keyword id="KW-0511">Multifunctional enzyme</keyword>
<keyword id="KW-0540">Nuclease</keyword>
<keyword id="KW-0547">Nucleotide-binding</keyword>
<keyword id="KW-0548">Nucleotidyltransferase</keyword>
<keyword id="KW-0539">Nucleus</keyword>
<keyword id="KW-0597">Phosphoprotein</keyword>
<keyword id="KW-0645">Protease</keyword>
<keyword id="KW-0688">Ribosomal frameshifting</keyword>
<keyword id="KW-0694">RNA-binding</keyword>
<keyword id="KW-0695">RNA-directed DNA polymerase</keyword>
<keyword id="KW-0808">Transferase</keyword>
<keyword id="KW-0814">Transposable element</keyword>
<keyword id="KW-0815">Transposition</keyword>
<keyword id="KW-1188">Viral release from host cell</keyword>
<keyword id="KW-0917">Virion maturation</keyword>
<keyword id="KW-0862">Zinc</keyword>
<keyword id="KW-0863">Zinc-finger</keyword>
<feature type="chain" id="PRO_0000278970" description="Transposon TyH3 Gag-Pol polyprotein">
    <location>
        <begin position="1"/>
        <end position="1755"/>
    </location>
</feature>
<feature type="chain" id="PRO_0000278971" description="Capsid protein">
    <location>
        <begin position="1"/>
        <end position="401"/>
    </location>
</feature>
<feature type="chain" id="PRO_0000278972" description="Ty1 protease">
    <location>
        <begin position="402"/>
        <end position="582"/>
    </location>
</feature>
<feature type="chain" id="PRO_0000278973" description="Integrase">
    <location>
        <begin position="583"/>
        <end position="1217"/>
    </location>
</feature>
<feature type="chain" id="PRO_0000278974" description="Reverse transcriptase/ribonuclease H">
    <location>
        <begin position="1218"/>
        <end position="1755"/>
    </location>
</feature>
<feature type="domain" description="Integrase catalytic" evidence="3">
    <location>
        <begin position="660"/>
        <end position="835"/>
    </location>
</feature>
<feature type="domain" description="Reverse transcriptase Ty1/copia-type">
    <location>
        <begin position="1338"/>
        <end position="1476"/>
    </location>
</feature>
<feature type="domain" description="RNase H Ty1/copia-type">
    <location>
        <begin position="1610"/>
        <end position="1752"/>
    </location>
</feature>
<feature type="region of interest" description="Disordered" evidence="5">
    <location>
        <begin position="1"/>
        <end position="93"/>
    </location>
</feature>
<feature type="region of interest" description="Disordered" evidence="5">
    <location>
        <begin position="126"/>
        <end position="173"/>
    </location>
</feature>
<feature type="region of interest" description="RNA-binding">
    <location>
        <begin position="299"/>
        <end position="401"/>
    </location>
</feature>
<feature type="region of interest" description="Disordered" evidence="5">
    <location>
        <begin position="352"/>
        <end position="421"/>
    </location>
</feature>
<feature type="region of interest" description="Integrase-type zinc finger-like">
    <location>
        <begin position="583"/>
        <end position="640"/>
    </location>
</feature>
<feature type="region of interest" description="Disordered" evidence="5">
    <location>
        <begin position="956"/>
        <end position="1087"/>
    </location>
</feature>
<feature type="region of interest" description="Disordered" evidence="5">
    <location>
        <begin position="1092"/>
        <end position="1111"/>
    </location>
</feature>
<feature type="region of interest" description="Disordered" evidence="5">
    <location>
        <begin position="1130"/>
        <end position="1187"/>
    </location>
</feature>
<feature type="short sequence motif" description="Bipartite nuclear localization signal">
    <location>
        <begin position="1178"/>
        <end position="1212"/>
    </location>
</feature>
<feature type="compositionally biased region" description="Polar residues" evidence="5">
    <location>
        <begin position="1"/>
        <end position="23"/>
    </location>
</feature>
<feature type="compositionally biased region" description="Polar residues" evidence="5">
    <location>
        <begin position="48"/>
        <end position="60"/>
    </location>
</feature>
<feature type="compositionally biased region" description="Polar residues" evidence="5">
    <location>
        <begin position="127"/>
        <end position="152"/>
    </location>
</feature>
<feature type="compositionally biased region" description="Low complexity" evidence="5">
    <location>
        <begin position="153"/>
        <end position="165"/>
    </location>
</feature>
<feature type="compositionally biased region" description="Low complexity" evidence="5">
    <location>
        <begin position="402"/>
        <end position="418"/>
    </location>
</feature>
<feature type="compositionally biased region" description="Low complexity" evidence="5">
    <location>
        <begin position="960"/>
        <end position="969"/>
    </location>
</feature>
<feature type="compositionally biased region" description="Polar residues" evidence="5">
    <location>
        <begin position="1005"/>
        <end position="1015"/>
    </location>
</feature>
<feature type="compositionally biased region" description="Basic and acidic residues" evidence="5">
    <location>
        <begin position="1038"/>
        <end position="1053"/>
    </location>
</feature>
<feature type="compositionally biased region" description="Polar residues" evidence="5">
    <location>
        <begin position="1054"/>
        <end position="1082"/>
    </location>
</feature>
<feature type="compositionally biased region" description="Polar residues" evidence="5">
    <location>
        <begin position="1101"/>
        <end position="1111"/>
    </location>
</feature>
<feature type="active site" description="For protease activity; shared with dimeric partner" evidence="4">
    <location>
        <position position="461"/>
    </location>
</feature>
<feature type="binding site" evidence="3">
    <location>
        <position position="671"/>
    </location>
    <ligand>
        <name>Mg(2+)</name>
        <dbReference type="ChEBI" id="CHEBI:18420"/>
        <label>1</label>
        <note>catalytic; for integrase activity</note>
    </ligand>
</feature>
<feature type="binding site" evidence="3">
    <location>
        <position position="736"/>
    </location>
    <ligand>
        <name>Mg(2+)</name>
        <dbReference type="ChEBI" id="CHEBI:18420"/>
        <label>1</label>
        <note>catalytic; for integrase activity</note>
    </ligand>
</feature>
<feature type="binding site" evidence="3">
    <location>
        <position position="1346"/>
    </location>
    <ligand>
        <name>Mg(2+)</name>
        <dbReference type="ChEBI" id="CHEBI:18420"/>
        <label>2</label>
        <note>catalytic; for reverse transcriptase activity</note>
    </ligand>
</feature>
<feature type="binding site" evidence="3">
    <location>
        <position position="1427"/>
    </location>
    <ligand>
        <name>Mg(2+)</name>
        <dbReference type="ChEBI" id="CHEBI:18420"/>
        <label>2</label>
        <note>catalytic; for reverse transcriptase activity</note>
    </ligand>
</feature>
<feature type="binding site" evidence="3">
    <location>
        <position position="1428"/>
    </location>
    <ligand>
        <name>Mg(2+)</name>
        <dbReference type="ChEBI" id="CHEBI:18420"/>
        <label>2</label>
        <note>catalytic; for reverse transcriptase activity</note>
    </ligand>
</feature>
<feature type="binding site" evidence="3">
    <location>
        <position position="1610"/>
    </location>
    <ligand>
        <name>Mg(2+)</name>
        <dbReference type="ChEBI" id="CHEBI:18420"/>
        <label>3</label>
        <note>catalytic; for RNase H activity</note>
    </ligand>
</feature>
<feature type="binding site" evidence="3">
    <location>
        <position position="1652"/>
    </location>
    <ligand>
        <name>Mg(2+)</name>
        <dbReference type="ChEBI" id="CHEBI:18420"/>
        <label>3</label>
        <note>catalytic; for RNase H activity</note>
    </ligand>
</feature>
<feature type="binding site" evidence="3">
    <location>
        <position position="1685"/>
    </location>
    <ligand>
        <name>Mg(2+)</name>
        <dbReference type="ChEBI" id="CHEBI:18420"/>
        <label>3</label>
        <note>catalytic; for RNase H activity</note>
    </ligand>
</feature>
<feature type="site" description="Cleavage; by Ty1 protease">
    <location>
        <begin position="401"/>
        <end position="402"/>
    </location>
</feature>
<feature type="site" description="Cleavage; by Ty1 protease">
    <location>
        <begin position="582"/>
        <end position="583"/>
    </location>
</feature>
<feature type="site" description="Cleavage; by Ty1 protease">
    <location>
        <begin position="1217"/>
        <end position="1218"/>
    </location>
</feature>
<feature type="modified residue" description="Phosphoserine" evidence="2">
    <location>
        <position position="416"/>
    </location>
</feature>
<feature type="sequence variant" description="In Ty1-15." evidence="11">
    <original>N</original>
    <variation>I</variation>
    <location>
        <position position="12"/>
    </location>
</feature>
<feature type="sequence variant" description="In Ty1-15." evidence="11">
    <original>PASVPP</original>
    <variation>TAQSHS</variation>
    <location>
        <begin position="74"/>
        <end position="79"/>
    </location>
</feature>
<feature type="sequence variant" description="In Ty1-15." evidence="11">
    <original>S</original>
    <variation>R</variation>
    <location>
        <position position="142"/>
    </location>
</feature>
<feature type="mutagenesis site" description="In Ty173; reduces transposition frequency 60-fold." evidence="10">
    <original>L</original>
    <variation>I</variation>
    <location>
        <position position="602"/>
    </location>
</feature>
<feature type="mutagenesis site" description="Partially prevents nuclear localization of integrase and reduces transposition efficiency by 30%. Prevents nuclear localization of integrase and reduces transposition efficiency by 99.6%; when associated with Gly-1179. Prevents nuclear localization of integrase; when associated with Gly-1179 and Thr-1180." evidence="13">
    <original>K</original>
    <variation>G</variation>
    <location>
        <position position="1178"/>
    </location>
</feature>
<feature type="mutagenesis site" description="Prevents nuclear localization of integrase and reduces transposition efficiency by 99.6%; when associated with Gly-1178. Prevents nuclear localization of integrase; when associated with Gly-1178 and Thr-1180." evidence="13">
    <original>K</original>
    <variation>G</variation>
    <location>
        <position position="1179"/>
    </location>
</feature>
<feature type="mutagenesis site" description="Prevents nuclear localization of integrase; when associated with Gly-1178 and Gly-1179." evidence="13">
    <original>R</original>
    <variation>T</variation>
    <location>
        <position position="1180"/>
    </location>
</feature>
<feature type="mutagenesis site" description="Prevents nuclear localization of integrase." evidence="13">
    <original>EDNETE</original>
    <variation>QNNQTQ</variation>
    <location>
        <begin position="1183"/>
        <end position="1188"/>
    </location>
</feature>
<feature type="mutagenesis site" description="Reduces transposition efficiency by 77%. Reduces transposition efficiency by 98.4%; when associated with Gly-1211. Reduces transposition efficiency by 99.8%; when associated with Gly-1211 and Thr-1212." evidence="13">
    <original>K</original>
    <variation>G</variation>
    <location>
        <position position="1210"/>
    </location>
</feature>
<feature type="mutagenesis site" description="Reduces transposition efficiency by 98.4%; when associated with Gly-1210. Reduces transposition efficiency by 99.8%; when associated with Gly-1210 and Thr-1212." evidence="13">
    <original>K</original>
    <variation>G</variation>
    <location>
        <position position="1211"/>
    </location>
</feature>
<feature type="mutagenesis site" description="Reduces transposition efficiency by 99.8%; when associated with Gly-1210 and Gly-1211." evidence="13">
    <original>R</original>
    <variation>T</variation>
    <location>
        <position position="1212"/>
    </location>
</feature>
<protein>
    <recommendedName>
        <fullName>Transposon TyH3 Gag-Pol polyprotein</fullName>
    </recommendedName>
    <alternativeName>
        <fullName>Gag-Pol-p199</fullName>
    </alternativeName>
    <alternativeName>
        <fullName>TY1A-TY1B</fullName>
    </alternativeName>
    <alternativeName>
        <fullName>Transposon Ty1-H3 TYA-TYB polyprotein</fullName>
    </alternativeName>
    <alternativeName>
        <fullName>p190</fullName>
    </alternativeName>
    <component>
        <recommendedName>
            <fullName>Capsid protein</fullName>
            <shortName>CA</shortName>
        </recommendedName>
        <alternativeName>
            <fullName>Gag-p45</fullName>
        </alternativeName>
        <alternativeName>
            <fullName>p54</fullName>
        </alternativeName>
    </component>
    <component>
        <recommendedName>
            <fullName>Ty1 protease</fullName>
            <shortName>PR</shortName>
            <ecNumber>3.4.23.-</ecNumber>
        </recommendedName>
        <alternativeName>
            <fullName>Pol-p20</fullName>
        </alternativeName>
        <alternativeName>
            <fullName>p23</fullName>
        </alternativeName>
    </component>
    <component>
        <recommendedName>
            <fullName>Integrase</fullName>
            <shortName>IN</shortName>
        </recommendedName>
        <alternativeName>
            <fullName>Pol-p71</fullName>
        </alternativeName>
        <alternativeName>
            <fullName>p84</fullName>
        </alternativeName>
        <alternativeName>
            <fullName>p90</fullName>
        </alternativeName>
    </component>
    <component>
        <recommendedName>
            <fullName>Reverse transcriptase/ribonuclease H</fullName>
            <shortName>RT</shortName>
            <shortName>RT-RH</shortName>
            <ecNumber>2.7.7.49</ecNumber>
            <ecNumber>2.7.7.7</ecNumber>
            <ecNumber>3.1.26.4</ecNumber>
        </recommendedName>
        <alternativeName>
            <fullName>Pol-p63</fullName>
        </alternativeName>
        <alternativeName>
            <fullName>p60</fullName>
        </alternativeName>
    </component>
</protein>
<name>TY1AB_YEASX</name>